<proteinExistence type="evidence at transcript level"/>
<organism>
    <name type="scientific">Arabidopsis thaliana</name>
    <name type="common">Mouse-ear cress</name>
    <dbReference type="NCBI Taxonomy" id="3702"/>
    <lineage>
        <taxon>Eukaryota</taxon>
        <taxon>Viridiplantae</taxon>
        <taxon>Streptophyta</taxon>
        <taxon>Embryophyta</taxon>
        <taxon>Tracheophyta</taxon>
        <taxon>Spermatophyta</taxon>
        <taxon>Magnoliopsida</taxon>
        <taxon>eudicotyledons</taxon>
        <taxon>Gunneridae</taxon>
        <taxon>Pentapetalae</taxon>
        <taxon>rosids</taxon>
        <taxon>malvids</taxon>
        <taxon>Brassicales</taxon>
        <taxon>Brassicaceae</taxon>
        <taxon>Camelineae</taxon>
        <taxon>Arabidopsis</taxon>
    </lineage>
</organism>
<name>FLS4_ARATH</name>
<evidence type="ECO:0000250" key="1"/>
<evidence type="ECO:0000255" key="2">
    <source>
        <dbReference type="PROSITE-ProRule" id="PRU00805"/>
    </source>
</evidence>
<evidence type="ECO:0000256" key="3">
    <source>
        <dbReference type="SAM" id="MobiDB-lite"/>
    </source>
</evidence>
<evidence type="ECO:0000305" key="4"/>
<accession>F4KAS1</accession>
<sequence length="279" mass="31901">MEVERDQHKPPLSLQNNKIPSSQNFPVVDLSNTNGELVARKVAKASEEWGIFQVVNHGIPTELIRRLHKVDTQFFELPESKKEAVAKPANSKEIQGYEMDDVQGRRSHIFHNLYPSSSVNYAFWPKNPPEYREVTEEFAKHAKQLAEEILGLLSEGAGYLMKINYYRPCPEPDWVMGIKAHTDFNGLTLLIPNEIFGLQVFKEDRWLDVDYIYPAVIIIIGDQIMKMSNGRYNNVLHRALMDKKKTRMSSVVHIKPPYDMVVSHFPNSPAAIILPSSSL</sequence>
<gene>
    <name type="primary">FLS4</name>
    <name type="ordered locus">At5g63595</name>
    <name type="ORF">MBK5</name>
</gene>
<feature type="chain" id="PRO_0000418026" description="Probable flavonol synthase 4">
    <location>
        <begin position="1"/>
        <end position="279"/>
    </location>
</feature>
<feature type="domain" description="Fe2OG dioxygenase" evidence="2">
    <location>
        <begin position="156"/>
        <end position="256"/>
    </location>
</feature>
<feature type="region of interest" description="Disordered" evidence="3">
    <location>
        <begin position="1"/>
        <end position="25"/>
    </location>
</feature>
<feature type="compositionally biased region" description="Polar residues" evidence="3">
    <location>
        <begin position="13"/>
        <end position="25"/>
    </location>
</feature>
<feature type="binding site" evidence="1">
    <location>
        <begin position="164"/>
        <end position="166"/>
    </location>
    <ligand>
        <name>2-oxoglutarate</name>
        <dbReference type="ChEBI" id="CHEBI:16810"/>
    </ligand>
</feature>
<feature type="binding site" evidence="2">
    <location>
        <position position="181"/>
    </location>
    <ligand>
        <name>Fe cation</name>
        <dbReference type="ChEBI" id="CHEBI:24875"/>
        <note>catalytic</note>
    </ligand>
</feature>
<feature type="binding site" evidence="2">
    <location>
        <position position="183"/>
    </location>
    <ligand>
        <name>Fe cation</name>
        <dbReference type="ChEBI" id="CHEBI:24875"/>
        <note>catalytic</note>
    </ligand>
</feature>
<feature type="binding site" evidence="2">
    <location>
        <position position="237"/>
    </location>
    <ligand>
        <name>Fe cation</name>
        <dbReference type="ChEBI" id="CHEBI:24875"/>
        <note>catalytic</note>
    </ligand>
</feature>
<feature type="binding site" evidence="1">
    <location>
        <begin position="247"/>
        <end position="249"/>
    </location>
    <ligand>
        <name>2-oxoglutarate</name>
        <dbReference type="ChEBI" id="CHEBI:16810"/>
    </ligand>
</feature>
<reference key="1">
    <citation type="journal article" date="1997" name="DNA Res.">
        <title>Structural analysis of Arabidopsis thaliana chromosome 5. I. Sequence features of the 1.6 Mb regions covered by twenty physically assigned P1 clones.</title>
        <authorList>
            <person name="Sato S."/>
            <person name="Kotani H."/>
            <person name="Nakamura Y."/>
            <person name="Kaneko T."/>
            <person name="Asamizu E."/>
            <person name="Fukami M."/>
            <person name="Miyajima N."/>
            <person name="Tabata S."/>
        </authorList>
    </citation>
    <scope>NUCLEOTIDE SEQUENCE [LARGE SCALE GENOMIC DNA]</scope>
    <source>
        <strain>cv. Columbia</strain>
    </source>
</reference>
<reference key="2">
    <citation type="journal article" date="2017" name="Plant J.">
        <title>Araport11: a complete reannotation of the Arabidopsis thaliana reference genome.</title>
        <authorList>
            <person name="Cheng C.Y."/>
            <person name="Krishnakumar V."/>
            <person name="Chan A.P."/>
            <person name="Thibaud-Nissen F."/>
            <person name="Schobel S."/>
            <person name="Town C.D."/>
        </authorList>
    </citation>
    <scope>GENOME REANNOTATION</scope>
    <source>
        <strain>cv. Columbia</strain>
    </source>
</reference>
<reference key="3">
    <citation type="journal article" date="2008" name="Plant Physiol.">
        <title>Functional analysis of a predicted flavonol synthase gene family in Arabidopsis.</title>
        <authorList>
            <person name="Owens D.K."/>
            <person name="Alerding A.B."/>
            <person name="Crosby K.C."/>
            <person name="Bandara A.B."/>
            <person name="Westwood J.H."/>
            <person name="Winkel B.S."/>
        </authorList>
    </citation>
    <scope>GENE FAMILY</scope>
    <scope>NOMENCLATURE</scope>
</reference>
<protein>
    <recommendedName>
        <fullName>Probable flavonol synthase 4</fullName>
        <ecNumber>1.14.20.6</ecNumber>
    </recommendedName>
</protein>
<keyword id="KW-0408">Iron</keyword>
<keyword id="KW-0479">Metal-binding</keyword>
<keyword id="KW-0560">Oxidoreductase</keyword>
<keyword id="KW-1185">Reference proteome</keyword>
<dbReference type="EC" id="1.14.20.6"/>
<dbReference type="EMBL" id="AB005234">
    <property type="status" value="NOT_ANNOTATED_CDS"/>
    <property type="molecule type" value="Genomic_DNA"/>
</dbReference>
<dbReference type="EMBL" id="CP002688">
    <property type="protein sequence ID" value="AED97773.1"/>
    <property type="molecule type" value="Genomic_DNA"/>
</dbReference>
<dbReference type="RefSeq" id="NP_680463.1">
    <property type="nucleotide sequence ID" value="NM_148158.2"/>
</dbReference>
<dbReference type="SMR" id="F4KAS1"/>
<dbReference type="FunCoup" id="F4KAS1">
    <property type="interactions" value="24"/>
</dbReference>
<dbReference type="STRING" id="3702.F4KAS1"/>
<dbReference type="PaxDb" id="3702-AT5G63595.1"/>
<dbReference type="EnsemblPlants" id="AT5G63595.1">
    <property type="protein sequence ID" value="AT5G63595.1"/>
    <property type="gene ID" value="AT5G63595"/>
</dbReference>
<dbReference type="GeneID" id="836479"/>
<dbReference type="Gramene" id="AT5G63595.1">
    <property type="protein sequence ID" value="AT5G63595.1"/>
    <property type="gene ID" value="AT5G63595"/>
</dbReference>
<dbReference type="KEGG" id="ath:AT5G63595"/>
<dbReference type="Araport" id="AT5G63595"/>
<dbReference type="TAIR" id="AT5G63595">
    <property type="gene designation" value="FLS4"/>
</dbReference>
<dbReference type="eggNOG" id="KOG0143">
    <property type="taxonomic scope" value="Eukaryota"/>
</dbReference>
<dbReference type="HOGENOM" id="CLU_010119_16_2_1"/>
<dbReference type="InParanoid" id="F4KAS1"/>
<dbReference type="OMA" id="GHWYDVN"/>
<dbReference type="PhylomeDB" id="F4KAS1"/>
<dbReference type="UniPathway" id="UPA00154"/>
<dbReference type="PRO" id="PR:F4KAS1"/>
<dbReference type="Proteomes" id="UP000006548">
    <property type="component" value="Chromosome 5"/>
</dbReference>
<dbReference type="ExpressionAtlas" id="F4KAS1">
    <property type="expression patterns" value="baseline and differential"/>
</dbReference>
<dbReference type="GO" id="GO:0045431">
    <property type="term" value="F:flavonol synthase activity"/>
    <property type="evidence" value="ECO:0007669"/>
    <property type="project" value="UniProtKB-EC"/>
</dbReference>
<dbReference type="GO" id="GO:0046872">
    <property type="term" value="F:metal ion binding"/>
    <property type="evidence" value="ECO:0007669"/>
    <property type="project" value="UniProtKB-KW"/>
</dbReference>
<dbReference type="FunFam" id="2.60.120.330:FF:000067">
    <property type="entry name" value="Probable flavonol synthase 5"/>
    <property type="match status" value="1"/>
</dbReference>
<dbReference type="Gene3D" id="2.60.120.330">
    <property type="entry name" value="B-lactam Antibiotic, Isopenicillin N Synthase, Chain"/>
    <property type="match status" value="1"/>
</dbReference>
<dbReference type="InterPro" id="IPR026992">
    <property type="entry name" value="DIOX_N"/>
</dbReference>
<dbReference type="InterPro" id="IPR044861">
    <property type="entry name" value="IPNS-like_FE2OG_OXY"/>
</dbReference>
<dbReference type="InterPro" id="IPR027443">
    <property type="entry name" value="IPNS-like_sf"/>
</dbReference>
<dbReference type="InterPro" id="IPR005123">
    <property type="entry name" value="Oxoglu/Fe-dep_dioxygenase_dom"/>
</dbReference>
<dbReference type="InterPro" id="IPR050295">
    <property type="entry name" value="Plant_2OG-oxidoreductases"/>
</dbReference>
<dbReference type="PANTHER" id="PTHR47991">
    <property type="entry name" value="OXOGLUTARATE/IRON-DEPENDENT DIOXYGENASE"/>
    <property type="match status" value="1"/>
</dbReference>
<dbReference type="Pfam" id="PF03171">
    <property type="entry name" value="2OG-FeII_Oxy"/>
    <property type="match status" value="1"/>
</dbReference>
<dbReference type="Pfam" id="PF14226">
    <property type="entry name" value="DIOX_N"/>
    <property type="match status" value="1"/>
</dbReference>
<dbReference type="SUPFAM" id="SSF51197">
    <property type="entry name" value="Clavaminate synthase-like"/>
    <property type="match status" value="1"/>
</dbReference>
<dbReference type="PROSITE" id="PS51471">
    <property type="entry name" value="FE2OG_OXY"/>
    <property type="match status" value="1"/>
</dbReference>
<comment type="catalytic activity">
    <reaction>
        <text>a (2R,3R)-dihydroflavonol + 2-oxoglutarate + O2 = a flavonol + succinate + CO2 + H2O</text>
        <dbReference type="Rhea" id="RHEA:21088"/>
        <dbReference type="ChEBI" id="CHEBI:15377"/>
        <dbReference type="ChEBI" id="CHEBI:15379"/>
        <dbReference type="ChEBI" id="CHEBI:16526"/>
        <dbReference type="ChEBI" id="CHEBI:16810"/>
        <dbReference type="ChEBI" id="CHEBI:28802"/>
        <dbReference type="ChEBI" id="CHEBI:30031"/>
        <dbReference type="ChEBI" id="CHEBI:138188"/>
        <dbReference type="EC" id="1.14.20.6"/>
    </reaction>
</comment>
<comment type="cofactor">
    <cofactor evidence="2">
        <name>Fe(2+)</name>
        <dbReference type="ChEBI" id="CHEBI:29033"/>
    </cofactor>
    <text evidence="2">Binds 1 Fe(2+) ion per subunit.</text>
</comment>
<comment type="pathway">
    <text>Secondary metabolite biosynthesis; flavonoid biosynthesis.</text>
</comment>
<comment type="similarity">
    <text evidence="4">Belongs to the iron/ascorbate-dependent oxidoreductase family.</text>
</comment>